<gene>
    <name evidence="1" type="primary">lysS</name>
    <name type="ordered locus">ASA_0940</name>
</gene>
<evidence type="ECO:0000255" key="1">
    <source>
        <dbReference type="HAMAP-Rule" id="MF_00252"/>
    </source>
</evidence>
<keyword id="KW-0030">Aminoacyl-tRNA synthetase</keyword>
<keyword id="KW-0067">ATP-binding</keyword>
<keyword id="KW-0963">Cytoplasm</keyword>
<keyword id="KW-0436">Ligase</keyword>
<keyword id="KW-0460">Magnesium</keyword>
<keyword id="KW-0479">Metal-binding</keyword>
<keyword id="KW-0547">Nucleotide-binding</keyword>
<keyword id="KW-0648">Protein biosynthesis</keyword>
<name>SYK_AERS4</name>
<feature type="chain" id="PRO_1000012837" description="Lysine--tRNA ligase">
    <location>
        <begin position="1"/>
        <end position="512"/>
    </location>
</feature>
<feature type="binding site" evidence="1">
    <location>
        <position position="421"/>
    </location>
    <ligand>
        <name>Mg(2+)</name>
        <dbReference type="ChEBI" id="CHEBI:18420"/>
        <label>1</label>
    </ligand>
</feature>
<feature type="binding site" evidence="1">
    <location>
        <position position="428"/>
    </location>
    <ligand>
        <name>Mg(2+)</name>
        <dbReference type="ChEBI" id="CHEBI:18420"/>
        <label>1</label>
    </ligand>
</feature>
<feature type="binding site" evidence="1">
    <location>
        <position position="428"/>
    </location>
    <ligand>
        <name>Mg(2+)</name>
        <dbReference type="ChEBI" id="CHEBI:18420"/>
        <label>2</label>
    </ligand>
</feature>
<reference key="1">
    <citation type="journal article" date="2008" name="BMC Genomics">
        <title>The genome of Aeromonas salmonicida subsp. salmonicida A449: insights into the evolution of a fish pathogen.</title>
        <authorList>
            <person name="Reith M.E."/>
            <person name="Singh R.K."/>
            <person name="Curtis B."/>
            <person name="Boyd J.M."/>
            <person name="Bouevitch A."/>
            <person name="Kimball J."/>
            <person name="Munholland J."/>
            <person name="Murphy C."/>
            <person name="Sarty D."/>
            <person name="Williams J."/>
            <person name="Nash J.H."/>
            <person name="Johnson S.C."/>
            <person name="Brown L.L."/>
        </authorList>
    </citation>
    <scope>NUCLEOTIDE SEQUENCE [LARGE SCALE GENOMIC DNA]</scope>
    <source>
        <strain>A449</strain>
    </source>
</reference>
<accession>A4SJK0</accession>
<proteinExistence type="inferred from homology"/>
<comment type="catalytic activity">
    <reaction evidence="1">
        <text>tRNA(Lys) + L-lysine + ATP = L-lysyl-tRNA(Lys) + AMP + diphosphate</text>
        <dbReference type="Rhea" id="RHEA:20792"/>
        <dbReference type="Rhea" id="RHEA-COMP:9696"/>
        <dbReference type="Rhea" id="RHEA-COMP:9697"/>
        <dbReference type="ChEBI" id="CHEBI:30616"/>
        <dbReference type="ChEBI" id="CHEBI:32551"/>
        <dbReference type="ChEBI" id="CHEBI:33019"/>
        <dbReference type="ChEBI" id="CHEBI:78442"/>
        <dbReference type="ChEBI" id="CHEBI:78529"/>
        <dbReference type="ChEBI" id="CHEBI:456215"/>
        <dbReference type="EC" id="6.1.1.6"/>
    </reaction>
</comment>
<comment type="cofactor">
    <cofactor evidence="1">
        <name>Mg(2+)</name>
        <dbReference type="ChEBI" id="CHEBI:18420"/>
    </cofactor>
    <text evidence="1">Binds 3 Mg(2+) ions per subunit.</text>
</comment>
<comment type="subunit">
    <text evidence="1">Homodimer.</text>
</comment>
<comment type="subcellular location">
    <subcellularLocation>
        <location evidence="1">Cytoplasm</location>
    </subcellularLocation>
</comment>
<comment type="similarity">
    <text evidence="1">Belongs to the class-II aminoacyl-tRNA synthetase family.</text>
</comment>
<organism>
    <name type="scientific">Aeromonas salmonicida (strain A449)</name>
    <dbReference type="NCBI Taxonomy" id="382245"/>
    <lineage>
        <taxon>Bacteria</taxon>
        <taxon>Pseudomonadati</taxon>
        <taxon>Pseudomonadota</taxon>
        <taxon>Gammaproteobacteria</taxon>
        <taxon>Aeromonadales</taxon>
        <taxon>Aeromonadaceae</taxon>
        <taxon>Aeromonas</taxon>
    </lineage>
</organism>
<protein>
    <recommendedName>
        <fullName evidence="1">Lysine--tRNA ligase</fullName>
        <ecNumber evidence="1">6.1.1.6</ecNumber>
    </recommendedName>
    <alternativeName>
        <fullName evidence="1">Lysyl-tRNA synthetase</fullName>
        <shortName evidence="1">LysRS</shortName>
    </alternativeName>
</protein>
<dbReference type="EC" id="6.1.1.6" evidence="1"/>
<dbReference type="EMBL" id="CP000644">
    <property type="protein sequence ID" value="ABO89072.1"/>
    <property type="molecule type" value="Genomic_DNA"/>
</dbReference>
<dbReference type="RefSeq" id="WP_005317721.1">
    <property type="nucleotide sequence ID" value="NC_009348.1"/>
</dbReference>
<dbReference type="SMR" id="A4SJK0"/>
<dbReference type="STRING" id="29491.GCA_000820065_02418"/>
<dbReference type="KEGG" id="asa:ASA_0940"/>
<dbReference type="PATRIC" id="fig|382245.13.peg.933"/>
<dbReference type="eggNOG" id="COG1190">
    <property type="taxonomic scope" value="Bacteria"/>
</dbReference>
<dbReference type="HOGENOM" id="CLU_008255_6_0_6"/>
<dbReference type="Proteomes" id="UP000000225">
    <property type="component" value="Chromosome"/>
</dbReference>
<dbReference type="GO" id="GO:0005829">
    <property type="term" value="C:cytosol"/>
    <property type="evidence" value="ECO:0007669"/>
    <property type="project" value="TreeGrafter"/>
</dbReference>
<dbReference type="GO" id="GO:0005524">
    <property type="term" value="F:ATP binding"/>
    <property type="evidence" value="ECO:0007669"/>
    <property type="project" value="UniProtKB-UniRule"/>
</dbReference>
<dbReference type="GO" id="GO:0004824">
    <property type="term" value="F:lysine-tRNA ligase activity"/>
    <property type="evidence" value="ECO:0007669"/>
    <property type="project" value="UniProtKB-UniRule"/>
</dbReference>
<dbReference type="GO" id="GO:0000287">
    <property type="term" value="F:magnesium ion binding"/>
    <property type="evidence" value="ECO:0007669"/>
    <property type="project" value="UniProtKB-UniRule"/>
</dbReference>
<dbReference type="GO" id="GO:0000049">
    <property type="term" value="F:tRNA binding"/>
    <property type="evidence" value="ECO:0007669"/>
    <property type="project" value="TreeGrafter"/>
</dbReference>
<dbReference type="GO" id="GO:0006430">
    <property type="term" value="P:lysyl-tRNA aminoacylation"/>
    <property type="evidence" value="ECO:0007669"/>
    <property type="project" value="UniProtKB-UniRule"/>
</dbReference>
<dbReference type="CDD" id="cd00775">
    <property type="entry name" value="LysRS_core"/>
    <property type="match status" value="1"/>
</dbReference>
<dbReference type="CDD" id="cd04322">
    <property type="entry name" value="LysRS_N"/>
    <property type="match status" value="1"/>
</dbReference>
<dbReference type="FunFam" id="2.40.50.140:FF:000024">
    <property type="entry name" value="Lysine--tRNA ligase"/>
    <property type="match status" value="1"/>
</dbReference>
<dbReference type="FunFam" id="3.30.930.10:FF:000001">
    <property type="entry name" value="Lysine--tRNA ligase"/>
    <property type="match status" value="1"/>
</dbReference>
<dbReference type="Gene3D" id="3.30.930.10">
    <property type="entry name" value="Bira Bifunctional Protein, Domain 2"/>
    <property type="match status" value="1"/>
</dbReference>
<dbReference type="Gene3D" id="2.40.50.140">
    <property type="entry name" value="Nucleic acid-binding proteins"/>
    <property type="match status" value="1"/>
</dbReference>
<dbReference type="HAMAP" id="MF_00252">
    <property type="entry name" value="Lys_tRNA_synth_class2"/>
    <property type="match status" value="1"/>
</dbReference>
<dbReference type="InterPro" id="IPR004364">
    <property type="entry name" value="Aa-tRNA-synt_II"/>
</dbReference>
<dbReference type="InterPro" id="IPR006195">
    <property type="entry name" value="aa-tRNA-synth_II"/>
</dbReference>
<dbReference type="InterPro" id="IPR045864">
    <property type="entry name" value="aa-tRNA-synth_II/BPL/LPL"/>
</dbReference>
<dbReference type="InterPro" id="IPR002313">
    <property type="entry name" value="Lys-tRNA-ligase_II"/>
</dbReference>
<dbReference type="InterPro" id="IPR034762">
    <property type="entry name" value="Lys-tRNA-ligase_II_bac/euk"/>
</dbReference>
<dbReference type="InterPro" id="IPR044136">
    <property type="entry name" value="Lys-tRNA-ligase_II_N"/>
</dbReference>
<dbReference type="InterPro" id="IPR018149">
    <property type="entry name" value="Lys-tRNA-synth_II_C"/>
</dbReference>
<dbReference type="InterPro" id="IPR012340">
    <property type="entry name" value="NA-bd_OB-fold"/>
</dbReference>
<dbReference type="InterPro" id="IPR004365">
    <property type="entry name" value="NA-bd_OB_tRNA"/>
</dbReference>
<dbReference type="NCBIfam" id="TIGR00499">
    <property type="entry name" value="lysS_bact"/>
    <property type="match status" value="1"/>
</dbReference>
<dbReference type="NCBIfam" id="NF001756">
    <property type="entry name" value="PRK00484.1"/>
    <property type="match status" value="1"/>
</dbReference>
<dbReference type="PANTHER" id="PTHR42918:SF15">
    <property type="entry name" value="LYSINE--TRNA LIGASE, CHLOROPLASTIC_MITOCHONDRIAL"/>
    <property type="match status" value="1"/>
</dbReference>
<dbReference type="PANTHER" id="PTHR42918">
    <property type="entry name" value="LYSYL-TRNA SYNTHETASE"/>
    <property type="match status" value="1"/>
</dbReference>
<dbReference type="Pfam" id="PF00152">
    <property type="entry name" value="tRNA-synt_2"/>
    <property type="match status" value="1"/>
</dbReference>
<dbReference type="Pfam" id="PF01336">
    <property type="entry name" value="tRNA_anti-codon"/>
    <property type="match status" value="1"/>
</dbReference>
<dbReference type="PIRSF" id="PIRSF039101">
    <property type="entry name" value="LysRS2"/>
    <property type="match status" value="1"/>
</dbReference>
<dbReference type="PRINTS" id="PR00982">
    <property type="entry name" value="TRNASYNTHLYS"/>
</dbReference>
<dbReference type="SUPFAM" id="SSF55681">
    <property type="entry name" value="Class II aaRS and biotin synthetases"/>
    <property type="match status" value="1"/>
</dbReference>
<dbReference type="SUPFAM" id="SSF50249">
    <property type="entry name" value="Nucleic acid-binding proteins"/>
    <property type="match status" value="1"/>
</dbReference>
<dbReference type="PROSITE" id="PS50862">
    <property type="entry name" value="AA_TRNA_LIGASE_II"/>
    <property type="match status" value="1"/>
</dbReference>
<sequence>MSEQTTTPEVDHTLELNNEMTERRSKLAALRAQGNPFPNDFRRDSLSGDLHAEFGDKSAEELVALGKQVKIAGRIMTRRIMGKASFATLQDMAGKIQIYVTRDDLPEGFYNEQFKKWDLGDIVGVEGTLFRTNTGELSVHVSTIRLLTKALRPLPEKHKGLTDQEARCRQRYLDLIANEESRKTFMIRTKVVAGIRKFFNDKRFMEVETPMMQVIPGGASARPFVTHHNALDIDMYLRIAPELYLKRLVVGGFERVYEINRNFRNEGISVRHNPEFTMIEFYMAYADYIDLMDLTEELLRTLAQDILGDTKIRYAKEGEEGLTIDFGQPFQRLTMVDSILKFNPDVTPADLATLESAKAVAKHLHIELMKGWELGHVITAIFEETVEHMLLQPTFITEYPAAVSPLARRNDVNPDVTDRFEFFIGGRELANGFSELNDAEDQAKRFQDQVNQKEAGDDEAMFYDADFVTALEHGLPPTAGQGIGIDRLVMLFTNSHTIRDVILFPALRPQQK</sequence>